<proteinExistence type="evidence at protein level"/>
<reference key="1">
    <citation type="journal article" date="2004" name="Proc. Natl. Acad. Sci. U.S.A.">
        <title>The diploid genome sequence of Candida albicans.</title>
        <authorList>
            <person name="Jones T."/>
            <person name="Federspiel N.A."/>
            <person name="Chibana H."/>
            <person name="Dungan J."/>
            <person name="Kalman S."/>
            <person name="Magee B.B."/>
            <person name="Newport G."/>
            <person name="Thorstenson Y.R."/>
            <person name="Agabian N."/>
            <person name="Magee P.T."/>
            <person name="Davis R.W."/>
            <person name="Scherer S."/>
        </authorList>
    </citation>
    <scope>NUCLEOTIDE SEQUENCE [LARGE SCALE GENOMIC DNA]</scope>
    <source>
        <strain>SC5314 / ATCC MYA-2876</strain>
    </source>
</reference>
<reference key="2">
    <citation type="journal article" date="2007" name="Genome Biol.">
        <title>Assembly of the Candida albicans genome into sixteen supercontigs aligned on the eight chromosomes.</title>
        <authorList>
            <person name="van het Hoog M."/>
            <person name="Rast T.J."/>
            <person name="Martchenko M."/>
            <person name="Grindle S."/>
            <person name="Dignard D."/>
            <person name="Hogues H."/>
            <person name="Cuomo C."/>
            <person name="Berriman M."/>
            <person name="Scherer S."/>
            <person name="Magee B.B."/>
            <person name="Whiteway M."/>
            <person name="Chibana H."/>
            <person name="Nantel A."/>
            <person name="Magee P.T."/>
        </authorList>
    </citation>
    <scope>GENOME REANNOTATION</scope>
    <source>
        <strain>SC5314 / ATCC MYA-2876</strain>
    </source>
</reference>
<reference key="3">
    <citation type="journal article" date="2013" name="Genome Biol.">
        <title>Assembly of a phased diploid Candida albicans genome facilitates allele-specific measurements and provides a simple model for repeat and indel structure.</title>
        <authorList>
            <person name="Muzzey D."/>
            <person name="Schwartz K."/>
            <person name="Weissman J.S."/>
            <person name="Sherlock G."/>
        </authorList>
    </citation>
    <scope>NUCLEOTIDE SEQUENCE [LARGE SCALE GENOMIC DNA]</scope>
    <scope>GENOME REANNOTATION</scope>
    <source>
        <strain>SC5314 / ATCC MYA-2876</strain>
    </source>
</reference>
<reference key="4">
    <citation type="journal article" date="1997" name="Microbiology">
        <title>A DNA-binding protein from Candida albicans that binds to the RPG box of Saccharomyces cerevisiae and the telomeric repeat sequence of C. albicans.</title>
        <authorList>
            <person name="Ishii N."/>
            <person name="Yamamoto M."/>
            <person name="Lahm H.-W."/>
            <person name="Iizumi S."/>
            <person name="Yoshihara F."/>
            <person name="Nakayama H."/>
            <person name="Arisawa M."/>
            <person name="Aoki Y."/>
        </authorList>
    </citation>
    <scope>FUNCTION</scope>
    <scope>SUBCELLULAR LOCATION</scope>
    <scope>DNA-BINDING</scope>
</reference>
<reference key="5">
    <citation type="journal article" date="1997" name="Microbiology">
        <title>Biochemical and genetic characterization of Rbf1p, a putative transcription factor of Candida albicans.</title>
        <authorList>
            <person name="Ishii N."/>
            <person name="Yamamoto M."/>
            <person name="Yoshihara F."/>
            <person name="Arisawa M."/>
            <person name="Aoki Y."/>
        </authorList>
    </citation>
    <scope>DNA-BINDING</scope>
    <scope>FUNCTION</scope>
    <scope>DISRUPTION PHENOTYPE</scope>
</reference>
<reference key="6">
    <citation type="journal article" date="1999" name="J. Bacteriol.">
        <title>HWP1 functions in the morphological development of Candida albicans downstream of EFG1, TUP1, and RBF1.</title>
        <authorList>
            <person name="Sharkey L.L."/>
            <person name="McNemar M.D."/>
            <person name="Saporito-Irwin S.M."/>
            <person name="Sypherd P.S."/>
            <person name="Fonzi W.A."/>
        </authorList>
    </citation>
    <scope>FUNCTION</scope>
    <scope>DISRUPTION PHENOTYPE</scope>
</reference>
<reference key="7">
    <citation type="journal article" date="2003" name="Mol. Microbiol.">
        <title>Identification of Candida albicans genes induced during thrush offers insight into pathogenesis.</title>
        <authorList>
            <person name="Cheng S."/>
            <person name="Clancy C.J."/>
            <person name="Checkley M.A."/>
            <person name="Handfield M."/>
            <person name="Hillman J.D."/>
            <person name="Progulske-Fox A."/>
            <person name="Lewin A.S."/>
            <person name="Fidel P.L."/>
            <person name="Nguyen M.H."/>
        </authorList>
    </citation>
    <scope>IDENTIFICATION AS AN IMMUNOGENIC ANTIGEN</scope>
    <scope>INDUCTION</scope>
</reference>
<reference key="8">
    <citation type="journal article" date="2006" name="Yeast">
        <title>Repression of CDC28 reduces the expression of the morphology-related transcription factors, Efg1p, Nrg1p, Rbf1p, Rim101p, Fkh2p and Tec1p and induces cell elongation in Candida albicans.</title>
        <authorList>
            <person name="Umeyama T."/>
            <person name="Kaneko A."/>
            <person name="Niimi M."/>
            <person name="Uehara Y."/>
        </authorList>
    </citation>
    <scope>INDUCTION</scope>
</reference>
<reference key="9">
    <citation type="journal article" date="2008" name="FEMS Yeast Res.">
        <title>Transcriptional profiling of the Candida albicans Ssk1p receiver domain point mutants and their virulence.</title>
        <authorList>
            <person name="Menon V."/>
            <person name="De Bernardis F."/>
            <person name="Calderone R."/>
            <person name="Chauhan N."/>
        </authorList>
    </citation>
    <scope>INDUCTION</scope>
</reference>
<reference key="10">
    <citation type="journal article" date="2010" name="Fungal Genet. Biol.">
        <title>The Sko1 protein represses the yeast-to-hypha transition and regulates the oxidative stress response in Candida albicans.</title>
        <authorList>
            <person name="Alonso-Monge R."/>
            <person name="Roman E."/>
            <person name="Arana D.M."/>
            <person name="Prieto D."/>
            <person name="Urrialde V."/>
            <person name="Nombela C."/>
            <person name="Pla J."/>
        </authorList>
    </citation>
    <scope>INDUCTION</scope>
</reference>
<sequence>MSSNKNQSDLNIPTNSASLKQKQRQQLGIKSEIGASTSDVYDPQVASYLSAGDSPSQFANTALHHSNSVSYSASAAAAAAELQHRAELQRRQQQLQQQELQHQQEQLQQYRQAQAQAQAQAQAQAQAQREHQQLQHAYQQQQQLHQLGQLSQQLAQPHLSQHEHVRDALTTDEFDTNEDLRSRYIENEIVKTFNSKAELVHFVKNELGPEERCKIVINSSKPKAVYFQCERSGSFRTTVKDATKRQRIAYTKRNKCAYRLVANLYPNEKDQKRKNKPDEPGHNEENSRISEMWVLRMINPQHNHAPDPINKKKRQKTSRTLVEKPINKPHHHHLLQQEQQQQQQQQQQQQQQQQQQQQQQHNANSQAQQQAAQLQQQMQQQLQASGLPTTPNYSELLGQLGQLSQQQSQQQQLHHIPQQRQRTQSQQSQQQPQQTPHGLDQPDAAVIAAIEASAAAAVASQGSPNVTAAAVAALQHTQGNEHDAQQQQDRGGNNGGAIDSNVDPSLDPNVDPNVQAHDHSHGLRNSYGKRSGFL</sequence>
<feature type="chain" id="PRO_0000425601" description="Transcription factor RBF1">
    <location>
        <begin position="1"/>
        <end position="534"/>
    </location>
</feature>
<feature type="region of interest" description="Disordered" evidence="2">
    <location>
        <begin position="1"/>
        <end position="36"/>
    </location>
</feature>
<feature type="region of interest" description="Disordered" evidence="2">
    <location>
        <begin position="262"/>
        <end position="285"/>
    </location>
</feature>
<feature type="region of interest" description="Disordered" evidence="2">
    <location>
        <begin position="353"/>
        <end position="372"/>
    </location>
</feature>
<feature type="region of interest" description="Disordered" evidence="2">
    <location>
        <begin position="402"/>
        <end position="439"/>
    </location>
</feature>
<feature type="region of interest" description="Disordered" evidence="2">
    <location>
        <begin position="477"/>
        <end position="534"/>
    </location>
</feature>
<feature type="coiled-coil region" evidence="1">
    <location>
        <begin position="77"/>
        <end position="147"/>
    </location>
</feature>
<feature type="coiled-coil region" evidence="1">
    <location>
        <begin position="332"/>
        <end position="386"/>
    </location>
</feature>
<feature type="compositionally biased region" description="Basic and acidic residues" evidence="2">
    <location>
        <begin position="267"/>
        <end position="285"/>
    </location>
</feature>
<feature type="compositionally biased region" description="Low complexity" evidence="2">
    <location>
        <begin position="402"/>
        <end position="435"/>
    </location>
</feature>
<evidence type="ECO:0000255" key="1"/>
<evidence type="ECO:0000256" key="2">
    <source>
        <dbReference type="SAM" id="MobiDB-lite"/>
    </source>
</evidence>
<evidence type="ECO:0000269" key="3">
    <source>
    </source>
</evidence>
<evidence type="ECO:0000269" key="4">
    <source>
    </source>
</evidence>
<evidence type="ECO:0000269" key="5">
    <source>
    </source>
</evidence>
<evidence type="ECO:0000269" key="6">
    <source>
    </source>
</evidence>
<evidence type="ECO:0000269" key="7">
    <source>
    </source>
</evidence>
<evidence type="ECO:0000269" key="8">
    <source>
    </source>
</evidence>
<evidence type="ECO:0000269" key="9">
    <source>
    </source>
</evidence>
<evidence type="ECO:0000305" key="10"/>
<name>RBF1_CANAL</name>
<comment type="function">
    <text evidence="3 8 9">Transcriptional activator that binds to the RPG box and to telomeres. Involved in the regulation of the transition between yeast and filamentous forms and plays a role in virulence. Induces expression of HWP1, a major hyphal cell protein and virulence factor.</text>
</comment>
<comment type="subcellular location">
    <subcellularLocation>
        <location evidence="8">Nucleus</location>
    </subcellularLocation>
    <subcellularLocation>
        <location evidence="8">Chromosome</location>
        <location evidence="8">Telomere</location>
    </subcellularLocation>
</comment>
<comment type="induction">
    <text evidence="4 5 6 7">Expression is increased in during infection. Expression is also regulated by CDC28, SKO1, and SSK1.</text>
</comment>
<comment type="disruption phenotype">
    <text evidence="3 9">Induces filamentous growth and leads to decreased HWP1 expression.</text>
</comment>
<comment type="similarity">
    <text evidence="10">Belongs to the RBF1 family.</text>
</comment>
<dbReference type="EMBL" id="CP017628">
    <property type="protein sequence ID" value="AOW30215.1"/>
    <property type="molecule type" value="Genomic_DNA"/>
</dbReference>
<dbReference type="RefSeq" id="XP_719121.1">
    <property type="nucleotide sequence ID" value="XM_714028.1"/>
</dbReference>
<dbReference type="STRING" id="237561.Q5ABZ2"/>
<dbReference type="EnsemblFungi" id="C6_02840C_A-T">
    <property type="protein sequence ID" value="C6_02840C_A-T-p1"/>
    <property type="gene ID" value="C6_02840C_A"/>
</dbReference>
<dbReference type="GeneID" id="3639251"/>
<dbReference type="KEGG" id="cal:CAALFM_C602840CA"/>
<dbReference type="CGD" id="CAL0000186291">
    <property type="gene designation" value="RBF1"/>
</dbReference>
<dbReference type="VEuPathDB" id="FungiDB:C6_02840C_A"/>
<dbReference type="eggNOG" id="ENOG502QQV3">
    <property type="taxonomic scope" value="Eukaryota"/>
</dbReference>
<dbReference type="HOGENOM" id="CLU_033822_0_0_1"/>
<dbReference type="InParanoid" id="Q5ABZ2"/>
<dbReference type="OMA" id="NVQAHDH"/>
<dbReference type="OrthoDB" id="4094480at2759"/>
<dbReference type="PRO" id="PR:Q5ABZ2"/>
<dbReference type="Proteomes" id="UP000000559">
    <property type="component" value="Chromosome 6"/>
</dbReference>
<dbReference type="GO" id="GO:0000781">
    <property type="term" value="C:chromosome, telomeric region"/>
    <property type="evidence" value="ECO:0007669"/>
    <property type="project" value="UniProtKB-SubCell"/>
</dbReference>
<dbReference type="GO" id="GO:0005737">
    <property type="term" value="C:cytoplasm"/>
    <property type="evidence" value="ECO:0000314"/>
    <property type="project" value="CGD"/>
</dbReference>
<dbReference type="GO" id="GO:0005634">
    <property type="term" value="C:nucleus"/>
    <property type="evidence" value="ECO:0000314"/>
    <property type="project" value="CGD"/>
</dbReference>
<dbReference type="GO" id="GO:0003677">
    <property type="term" value="F:DNA binding"/>
    <property type="evidence" value="ECO:0000314"/>
    <property type="project" value="CGD"/>
</dbReference>
<dbReference type="GO" id="GO:0003700">
    <property type="term" value="F:DNA-binding transcription factor activity"/>
    <property type="evidence" value="ECO:0000314"/>
    <property type="project" value="CGD"/>
</dbReference>
<dbReference type="GO" id="GO:0042162">
    <property type="term" value="F:telomeric DNA binding"/>
    <property type="evidence" value="ECO:0000314"/>
    <property type="project" value="CGD"/>
</dbReference>
<dbReference type="GO" id="GO:0030447">
    <property type="term" value="P:filamentous growth"/>
    <property type="evidence" value="ECO:0000315"/>
    <property type="project" value="CGD"/>
</dbReference>
<dbReference type="GO" id="GO:0044180">
    <property type="term" value="P:filamentous growth of a unicellular organism"/>
    <property type="evidence" value="ECO:0000315"/>
    <property type="project" value="CGD"/>
</dbReference>
<dbReference type="GO" id="GO:0045893">
    <property type="term" value="P:positive regulation of DNA-templated transcription"/>
    <property type="evidence" value="ECO:0000314"/>
    <property type="project" value="CGD"/>
</dbReference>
<dbReference type="GO" id="GO:0044010">
    <property type="term" value="P:single-species biofilm formation"/>
    <property type="evidence" value="ECO:0000315"/>
    <property type="project" value="CGD"/>
</dbReference>
<dbReference type="SUPFAM" id="SSF81995">
    <property type="entry name" value="beta-sandwich domain of Sec23/24"/>
    <property type="match status" value="1"/>
</dbReference>
<accession>Q5ABZ2</accession>
<accession>A0A1D8PQ02</accession>
<accession>Q5ACB3</accession>
<gene>
    <name type="primary">RBF1</name>
    <name type="ordered locus">CAALFM_C602840CA</name>
    <name type="ORF">CaO19.13004</name>
    <name type="ORF">CaO19.5558</name>
</gene>
<organism>
    <name type="scientific">Candida albicans (strain SC5314 / ATCC MYA-2876)</name>
    <name type="common">Yeast</name>
    <dbReference type="NCBI Taxonomy" id="237561"/>
    <lineage>
        <taxon>Eukaryota</taxon>
        <taxon>Fungi</taxon>
        <taxon>Dikarya</taxon>
        <taxon>Ascomycota</taxon>
        <taxon>Saccharomycotina</taxon>
        <taxon>Pichiomycetes</taxon>
        <taxon>Debaryomycetaceae</taxon>
        <taxon>Candida/Lodderomyces clade</taxon>
        <taxon>Candida</taxon>
    </lineage>
</organism>
<protein>
    <recommendedName>
        <fullName>Transcription factor RBF1</fullName>
    </recommendedName>
    <alternativeName>
        <fullName>RPG-box-binding factor 1</fullName>
    </alternativeName>
</protein>
<keyword id="KW-0010">Activator</keyword>
<keyword id="KW-0158">Chromosome</keyword>
<keyword id="KW-0175">Coiled coil</keyword>
<keyword id="KW-0238">DNA-binding</keyword>
<keyword id="KW-0539">Nucleus</keyword>
<keyword id="KW-1185">Reference proteome</keyword>
<keyword id="KW-0779">Telomere</keyword>
<keyword id="KW-0804">Transcription</keyword>
<keyword id="KW-0805">Transcription regulation</keyword>
<keyword id="KW-0843">Virulence</keyword>